<feature type="chain" id="PRO_1000191824" description="Transcriptional repressor NrdR">
    <location>
        <begin position="1"/>
        <end position="151"/>
    </location>
</feature>
<feature type="domain" description="ATP-cone" evidence="1">
    <location>
        <begin position="49"/>
        <end position="139"/>
    </location>
</feature>
<feature type="zinc finger region" evidence="1">
    <location>
        <begin position="3"/>
        <end position="34"/>
    </location>
</feature>
<gene>
    <name evidence="1" type="primary">nrdR</name>
    <name type="ordered locus">SYO3AOP1_1431</name>
</gene>
<accession>B2V5T9</accession>
<protein>
    <recommendedName>
        <fullName evidence="1">Transcriptional repressor NrdR</fullName>
    </recommendedName>
</protein>
<organism>
    <name type="scientific">Sulfurihydrogenibium sp. (strain YO3AOP1)</name>
    <dbReference type="NCBI Taxonomy" id="436114"/>
    <lineage>
        <taxon>Bacteria</taxon>
        <taxon>Pseudomonadati</taxon>
        <taxon>Aquificota</taxon>
        <taxon>Aquificia</taxon>
        <taxon>Aquificales</taxon>
        <taxon>Hydrogenothermaceae</taxon>
        <taxon>Sulfurihydrogenibium</taxon>
    </lineage>
</organism>
<sequence>MKCPKCGSLNDKVLETRQSKEGVVIKRRRECLNCGYRFTTYERIEEEHIEVIKKNNTVEPFNKEKIIRGILLASKNRPITQEQIKQIADDIEKYLLDEGKLKVSSAEIGDLVKNRLKELDPVSYLRFVSVFDGFEDIKDFEEFIKSFEKKI</sequence>
<evidence type="ECO:0000255" key="1">
    <source>
        <dbReference type="HAMAP-Rule" id="MF_00440"/>
    </source>
</evidence>
<comment type="function">
    <text evidence="1">Negatively regulates transcription of bacterial ribonucleotide reductase nrd genes and operons by binding to NrdR-boxes.</text>
</comment>
<comment type="cofactor">
    <cofactor evidence="1">
        <name>Zn(2+)</name>
        <dbReference type="ChEBI" id="CHEBI:29105"/>
    </cofactor>
    <text evidence="1">Binds 1 zinc ion.</text>
</comment>
<comment type="similarity">
    <text evidence="1">Belongs to the NrdR family.</text>
</comment>
<keyword id="KW-0067">ATP-binding</keyword>
<keyword id="KW-0238">DNA-binding</keyword>
<keyword id="KW-0479">Metal-binding</keyword>
<keyword id="KW-0547">Nucleotide-binding</keyword>
<keyword id="KW-0678">Repressor</keyword>
<keyword id="KW-0804">Transcription</keyword>
<keyword id="KW-0805">Transcription regulation</keyword>
<keyword id="KW-0862">Zinc</keyword>
<keyword id="KW-0863">Zinc-finger</keyword>
<proteinExistence type="inferred from homology"/>
<dbReference type="EMBL" id="CP001080">
    <property type="protein sequence ID" value="ACD67033.1"/>
    <property type="molecule type" value="Genomic_DNA"/>
</dbReference>
<dbReference type="RefSeq" id="WP_012460090.1">
    <property type="nucleotide sequence ID" value="NC_010730.1"/>
</dbReference>
<dbReference type="SMR" id="B2V5T9"/>
<dbReference type="STRING" id="436114.SYO3AOP1_1431"/>
<dbReference type="KEGG" id="sul:SYO3AOP1_1431"/>
<dbReference type="eggNOG" id="COG1327">
    <property type="taxonomic scope" value="Bacteria"/>
</dbReference>
<dbReference type="HOGENOM" id="CLU_108412_0_0_0"/>
<dbReference type="GO" id="GO:0005524">
    <property type="term" value="F:ATP binding"/>
    <property type="evidence" value="ECO:0007669"/>
    <property type="project" value="UniProtKB-KW"/>
</dbReference>
<dbReference type="GO" id="GO:0003677">
    <property type="term" value="F:DNA binding"/>
    <property type="evidence" value="ECO:0007669"/>
    <property type="project" value="UniProtKB-KW"/>
</dbReference>
<dbReference type="GO" id="GO:0008270">
    <property type="term" value="F:zinc ion binding"/>
    <property type="evidence" value="ECO:0007669"/>
    <property type="project" value="UniProtKB-UniRule"/>
</dbReference>
<dbReference type="GO" id="GO:0045892">
    <property type="term" value="P:negative regulation of DNA-templated transcription"/>
    <property type="evidence" value="ECO:0007669"/>
    <property type="project" value="UniProtKB-UniRule"/>
</dbReference>
<dbReference type="HAMAP" id="MF_00440">
    <property type="entry name" value="NrdR"/>
    <property type="match status" value="1"/>
</dbReference>
<dbReference type="InterPro" id="IPR005144">
    <property type="entry name" value="ATP-cone_dom"/>
</dbReference>
<dbReference type="InterPro" id="IPR055173">
    <property type="entry name" value="NrdR-like_N"/>
</dbReference>
<dbReference type="InterPro" id="IPR003796">
    <property type="entry name" value="RNR_NrdR-like"/>
</dbReference>
<dbReference type="NCBIfam" id="TIGR00244">
    <property type="entry name" value="transcriptional regulator NrdR"/>
    <property type="match status" value="1"/>
</dbReference>
<dbReference type="PANTHER" id="PTHR30455">
    <property type="entry name" value="TRANSCRIPTIONAL REPRESSOR NRDR"/>
    <property type="match status" value="1"/>
</dbReference>
<dbReference type="PANTHER" id="PTHR30455:SF2">
    <property type="entry name" value="TRANSCRIPTIONAL REPRESSOR NRDR"/>
    <property type="match status" value="1"/>
</dbReference>
<dbReference type="Pfam" id="PF03477">
    <property type="entry name" value="ATP-cone"/>
    <property type="match status" value="1"/>
</dbReference>
<dbReference type="Pfam" id="PF22811">
    <property type="entry name" value="Zn_ribbon_NrdR"/>
    <property type="match status" value="1"/>
</dbReference>
<dbReference type="PROSITE" id="PS51161">
    <property type="entry name" value="ATP_CONE"/>
    <property type="match status" value="1"/>
</dbReference>
<reference key="1">
    <citation type="journal article" date="2009" name="J. Bacteriol.">
        <title>Complete and draft genome sequences of six members of the Aquificales.</title>
        <authorList>
            <person name="Reysenbach A.-L."/>
            <person name="Hamamura N."/>
            <person name="Podar M."/>
            <person name="Griffiths E."/>
            <person name="Ferreira S."/>
            <person name="Hochstein R."/>
            <person name="Heidelberg J."/>
            <person name="Johnson J."/>
            <person name="Mead D."/>
            <person name="Pohorille A."/>
            <person name="Sarmiento M."/>
            <person name="Schweighofer K."/>
            <person name="Seshadri R."/>
            <person name="Voytek M.A."/>
        </authorList>
    </citation>
    <scope>NUCLEOTIDE SEQUENCE [LARGE SCALE GENOMIC DNA]</scope>
    <source>
        <strain>YO3AOP1</strain>
    </source>
</reference>
<name>NRDR_SULSY</name>